<protein>
    <recommendedName>
        <fullName evidence="1">Ribosome rescue factor SmrB</fullName>
        <ecNumber evidence="1">3.1.-.-</ecNumber>
    </recommendedName>
</protein>
<gene>
    <name evidence="1" type="primary">smrB</name>
    <name type="ordered locus">SO_3081</name>
</gene>
<keyword id="KW-0255">Endonuclease</keyword>
<keyword id="KW-0378">Hydrolase</keyword>
<keyword id="KW-0540">Nuclease</keyword>
<keyword id="KW-1185">Reference proteome</keyword>
<keyword id="KW-0694">RNA-binding</keyword>
<keyword id="KW-0699">rRNA-binding</keyword>
<name>SMRB_SHEON</name>
<accession>P59236</accession>
<reference key="1">
    <citation type="journal article" date="2002" name="Nat. Biotechnol.">
        <title>Genome sequence of the dissimilatory metal ion-reducing bacterium Shewanella oneidensis.</title>
        <authorList>
            <person name="Heidelberg J.F."/>
            <person name="Paulsen I.T."/>
            <person name="Nelson K.E."/>
            <person name="Gaidos E.J."/>
            <person name="Nelson W.C."/>
            <person name="Read T.D."/>
            <person name="Eisen J.A."/>
            <person name="Seshadri R."/>
            <person name="Ward N.L."/>
            <person name="Methe B.A."/>
            <person name="Clayton R.A."/>
            <person name="Meyer T."/>
            <person name="Tsapin A."/>
            <person name="Scott J."/>
            <person name="Beanan M.J."/>
            <person name="Brinkac L.M."/>
            <person name="Daugherty S.C."/>
            <person name="DeBoy R.T."/>
            <person name="Dodson R.J."/>
            <person name="Durkin A.S."/>
            <person name="Haft D.H."/>
            <person name="Kolonay J.F."/>
            <person name="Madupu R."/>
            <person name="Peterson J.D."/>
            <person name="Umayam L.A."/>
            <person name="White O."/>
            <person name="Wolf A.M."/>
            <person name="Vamathevan J.J."/>
            <person name="Weidman J.F."/>
            <person name="Impraim M."/>
            <person name="Lee K."/>
            <person name="Berry K.J."/>
            <person name="Lee C."/>
            <person name="Mueller J."/>
            <person name="Khouri H.M."/>
            <person name="Gill J."/>
            <person name="Utterback T.R."/>
            <person name="McDonald L.A."/>
            <person name="Feldblyum T.V."/>
            <person name="Smith H.O."/>
            <person name="Venter J.C."/>
            <person name="Nealson K.H."/>
            <person name="Fraser C.M."/>
        </authorList>
    </citation>
    <scope>NUCLEOTIDE SEQUENCE [LARGE SCALE GENOMIC DNA]</scope>
    <source>
        <strain>ATCC 700550 / JCM 31522 / CIP 106686 / LMG 19005 / NCIMB 14063 / MR-1</strain>
    </source>
</reference>
<proteinExistence type="inferred from homology"/>
<dbReference type="EC" id="3.1.-.-" evidence="1"/>
<dbReference type="EMBL" id="AE014299">
    <property type="protein sequence ID" value="AAN56088.1"/>
    <property type="molecule type" value="Genomic_DNA"/>
</dbReference>
<dbReference type="RefSeq" id="NP_718644.1">
    <property type="nucleotide sequence ID" value="NC_004347.2"/>
</dbReference>
<dbReference type="RefSeq" id="WP_011072978.1">
    <property type="nucleotide sequence ID" value="NC_004347.2"/>
</dbReference>
<dbReference type="SMR" id="P59236"/>
<dbReference type="STRING" id="211586.SO_3081"/>
<dbReference type="PaxDb" id="211586-SO_3081"/>
<dbReference type="KEGG" id="son:SO_3081"/>
<dbReference type="PATRIC" id="fig|211586.12.peg.2977"/>
<dbReference type="eggNOG" id="COG2840">
    <property type="taxonomic scope" value="Bacteria"/>
</dbReference>
<dbReference type="HOGENOM" id="CLU_055978_4_0_6"/>
<dbReference type="OrthoDB" id="5795446at2"/>
<dbReference type="PhylomeDB" id="P59236"/>
<dbReference type="BioCyc" id="SONE211586:G1GMP-2852-MONOMER"/>
<dbReference type="Proteomes" id="UP000008186">
    <property type="component" value="Chromosome"/>
</dbReference>
<dbReference type="GO" id="GO:0004521">
    <property type="term" value="F:RNA endonuclease activity"/>
    <property type="evidence" value="ECO:0007669"/>
    <property type="project" value="UniProtKB-UniRule"/>
</dbReference>
<dbReference type="GO" id="GO:0019843">
    <property type="term" value="F:rRNA binding"/>
    <property type="evidence" value="ECO:0007669"/>
    <property type="project" value="UniProtKB-UniRule"/>
</dbReference>
<dbReference type="GO" id="GO:0072344">
    <property type="term" value="P:rescue of stalled ribosome"/>
    <property type="evidence" value="ECO:0007669"/>
    <property type="project" value="UniProtKB-UniRule"/>
</dbReference>
<dbReference type="Gene3D" id="3.30.1370.110">
    <property type="match status" value="1"/>
</dbReference>
<dbReference type="HAMAP" id="MF_01042">
    <property type="entry name" value="SmrB"/>
    <property type="match status" value="1"/>
</dbReference>
<dbReference type="InterPro" id="IPR002625">
    <property type="entry name" value="Smr_dom"/>
</dbReference>
<dbReference type="InterPro" id="IPR036063">
    <property type="entry name" value="Smr_dom_sf"/>
</dbReference>
<dbReference type="InterPro" id="IPR022990">
    <property type="entry name" value="SmrB-like"/>
</dbReference>
<dbReference type="NCBIfam" id="NF003432">
    <property type="entry name" value="PRK04946.1"/>
    <property type="match status" value="1"/>
</dbReference>
<dbReference type="PANTHER" id="PTHR35562">
    <property type="entry name" value="DNA ENDONUCLEASE SMRA-RELATED"/>
    <property type="match status" value="1"/>
</dbReference>
<dbReference type="PANTHER" id="PTHR35562:SF1">
    <property type="entry name" value="UPF0115 PROTEIN YFCN"/>
    <property type="match status" value="1"/>
</dbReference>
<dbReference type="Pfam" id="PF01713">
    <property type="entry name" value="Smr"/>
    <property type="match status" value="1"/>
</dbReference>
<dbReference type="SMART" id="SM00463">
    <property type="entry name" value="SMR"/>
    <property type="match status" value="1"/>
</dbReference>
<dbReference type="SUPFAM" id="SSF160443">
    <property type="entry name" value="SMR domain-like"/>
    <property type="match status" value="1"/>
</dbReference>
<dbReference type="PROSITE" id="PS50828">
    <property type="entry name" value="SMR"/>
    <property type="match status" value="1"/>
</dbReference>
<comment type="function">
    <text evidence="1">Acts as a ribosome collision sensor. Detects stalled/collided disomes (pairs of ribosomes where the leading ribosome is stalled and a second ribosome has collided with it) and endonucleolytically cleaves mRNA at the 5' boundary of the stalled ribosome. Stalled/collided disomes form a new interface (primarily via the 30S subunits) that binds SmrB. Cleaved mRNA becomes available for tmRNA ligation, leading to ribosomal subunit dissociation and rescue of stalled ribosomes.</text>
</comment>
<comment type="subunit">
    <text evidence="1">Associates with collided ribosomes, but not with correctly translating polysomes.</text>
</comment>
<comment type="similarity">
    <text evidence="1">Belongs to the SmrB family.</text>
</comment>
<sequence length="176" mass="20191">MNKDDDKEGMAMFSALIEGIKPITQDKRHFRTPLKTKQEIELKEQQLHANSYFSDTYQPLLPVQGPMRWLDEGVDSLELKRLRRGDYQPDLLLDLHGYRQSEAKLELAALIQACVKQQSQCCCVMHGYGTGILKQQVPMWLVQHPMVKAFHQAPKEWGGDAALLVLIDIGDQPHRR</sequence>
<feature type="chain" id="PRO_0000214561" description="Ribosome rescue factor SmrB">
    <location>
        <begin position="1"/>
        <end position="176"/>
    </location>
</feature>
<feature type="domain" description="Smr" evidence="1">
    <location>
        <begin position="93"/>
        <end position="168"/>
    </location>
</feature>
<organism>
    <name type="scientific">Shewanella oneidensis (strain ATCC 700550 / JCM 31522 / CIP 106686 / LMG 19005 / NCIMB 14063 / MR-1)</name>
    <dbReference type="NCBI Taxonomy" id="211586"/>
    <lineage>
        <taxon>Bacteria</taxon>
        <taxon>Pseudomonadati</taxon>
        <taxon>Pseudomonadota</taxon>
        <taxon>Gammaproteobacteria</taxon>
        <taxon>Alteromonadales</taxon>
        <taxon>Shewanellaceae</taxon>
        <taxon>Shewanella</taxon>
    </lineage>
</organism>
<evidence type="ECO:0000255" key="1">
    <source>
        <dbReference type="HAMAP-Rule" id="MF_01042"/>
    </source>
</evidence>